<name>KC1A_CHICK</name>
<keyword id="KW-0025">Alternative splicing</keyword>
<keyword id="KW-0067">ATP-binding</keyword>
<keyword id="KW-0131">Cell cycle</keyword>
<keyword id="KW-0132">Cell division</keyword>
<keyword id="KW-0966">Cell projection</keyword>
<keyword id="KW-0137">Centromere</keyword>
<keyword id="KW-0158">Chromosome</keyword>
<keyword id="KW-0963">Cytoplasm</keyword>
<keyword id="KW-0206">Cytoskeleton</keyword>
<keyword id="KW-0418">Kinase</keyword>
<keyword id="KW-0995">Kinetochore</keyword>
<keyword id="KW-0498">Mitosis</keyword>
<keyword id="KW-0547">Nucleotide-binding</keyword>
<keyword id="KW-0539">Nucleus</keyword>
<keyword id="KW-0597">Phosphoprotein</keyword>
<keyword id="KW-1185">Reference proteome</keyword>
<keyword id="KW-0723">Serine/threonine-protein kinase</keyword>
<keyword id="KW-0808">Transferase</keyword>
<keyword id="KW-0879">Wnt signaling pathway</keyword>
<organism>
    <name type="scientific">Gallus gallus</name>
    <name type="common">Chicken</name>
    <dbReference type="NCBI Taxonomy" id="9031"/>
    <lineage>
        <taxon>Eukaryota</taxon>
        <taxon>Metazoa</taxon>
        <taxon>Chordata</taxon>
        <taxon>Craniata</taxon>
        <taxon>Vertebrata</taxon>
        <taxon>Euteleostomi</taxon>
        <taxon>Archelosauria</taxon>
        <taxon>Archosauria</taxon>
        <taxon>Dinosauria</taxon>
        <taxon>Saurischia</taxon>
        <taxon>Theropoda</taxon>
        <taxon>Coelurosauria</taxon>
        <taxon>Aves</taxon>
        <taxon>Neognathae</taxon>
        <taxon>Galloanserae</taxon>
        <taxon>Galliformes</taxon>
        <taxon>Phasianidae</taxon>
        <taxon>Phasianinae</taxon>
        <taxon>Gallus</taxon>
    </lineage>
</organism>
<feature type="chain" id="PRO_0000192828" description="Casein kinase I isoform alpha">
    <location>
        <begin position="1"/>
        <end position="337"/>
    </location>
</feature>
<feature type="domain" description="Protein kinase" evidence="3">
    <location>
        <begin position="17"/>
        <end position="285"/>
    </location>
</feature>
<feature type="region of interest" description="Disordered" evidence="5">
    <location>
        <begin position="309"/>
        <end position="337"/>
    </location>
</feature>
<feature type="compositionally biased region" description="Low complexity" evidence="5">
    <location>
        <begin position="309"/>
        <end position="325"/>
    </location>
</feature>
<feature type="active site" description="Proton acceptor" evidence="3 4">
    <location>
        <position position="136"/>
    </location>
</feature>
<feature type="binding site" evidence="3">
    <location>
        <begin position="23"/>
        <end position="31"/>
    </location>
    <ligand>
        <name>ATP</name>
        <dbReference type="ChEBI" id="CHEBI:30616"/>
    </ligand>
</feature>
<feature type="binding site" evidence="3">
    <location>
        <position position="46"/>
    </location>
    <ligand>
        <name>ATP</name>
        <dbReference type="ChEBI" id="CHEBI:30616"/>
    </ligand>
</feature>
<feature type="splice variant" id="VSP_004746" description="In isoform CK1A-LS." evidence="6">
    <original>N</original>
    <variation>KCLESPVGKRKRSMTVSTSQDPSFSGLNQ</variation>
    <location>
        <position position="151"/>
    </location>
</feature>
<feature type="splice variant" id="VSP_004747" description="In isoform CK1A-L." evidence="6">
    <original>KQTDKSKSNMKGF</original>
    <variation>F</variation>
    <location>
        <begin position="325"/>
        <end position="337"/>
    </location>
</feature>
<sequence>MASSSGSKAEFIVGGKYKLVRKIGSGSFGDIYLAINITNGEEVAVKLESQKARHPQLLYESKLYKILQGGVGIPHIRWYGQEKDYNVLVMDLLGPSLEDLFNFCSRRFTMKTVLMLADQMISRIEYVHTKNFIHRDIKPDNFLMGIGRHCNKLFLIDFGLAKKYRDNRTRQHIPYREDKNLTGTARYASINAHLGIEQSRRDDMESLGYVLMYFNRTSLPWQGLKAATKKQKYEKISEKKMSTPVEVLCKGFPAEFAMYLNYCRGLRFEEAPDYMYLRQLFRILFRTLNHQYDYTFDWTMLKQKAAQQAASSSGQGQQAQTPTGKQTDKSKSNMKGF</sequence>
<accession>P67962</accession>
<accession>O57528</accession>
<accession>P70065</accession>
<accession>P79789</accession>
<accession>P79790</accession>
<gene>
    <name type="primary">CSNK1A1</name>
</gene>
<protein>
    <recommendedName>
        <fullName>Casein kinase I isoform alpha</fullName>
        <shortName>CKI-alpha</shortName>
        <ecNumber>2.7.11.1</ecNumber>
    </recommendedName>
    <alternativeName>
        <fullName>CK1</fullName>
    </alternativeName>
</protein>
<comment type="function">
    <text evidence="1">Casein kinases are operationally defined by their preferential utilization of acidic proteins such as caseins as substrates. It can phosphorylate a large number of proteins. Participates in Wnt signaling. May play a role in segregating chromosomes during mitosis. May play a role in keratin cytoskeleton disassembly.</text>
</comment>
<comment type="catalytic activity">
    <reaction>
        <text>L-seryl-[protein] + ATP = O-phospho-L-seryl-[protein] + ADP + H(+)</text>
        <dbReference type="Rhea" id="RHEA:17989"/>
        <dbReference type="Rhea" id="RHEA-COMP:9863"/>
        <dbReference type="Rhea" id="RHEA-COMP:11604"/>
        <dbReference type="ChEBI" id="CHEBI:15378"/>
        <dbReference type="ChEBI" id="CHEBI:29999"/>
        <dbReference type="ChEBI" id="CHEBI:30616"/>
        <dbReference type="ChEBI" id="CHEBI:83421"/>
        <dbReference type="ChEBI" id="CHEBI:456216"/>
        <dbReference type="EC" id="2.7.11.1"/>
    </reaction>
</comment>
<comment type="catalytic activity">
    <reaction>
        <text>L-threonyl-[protein] + ATP = O-phospho-L-threonyl-[protein] + ADP + H(+)</text>
        <dbReference type="Rhea" id="RHEA:46608"/>
        <dbReference type="Rhea" id="RHEA-COMP:11060"/>
        <dbReference type="Rhea" id="RHEA-COMP:11605"/>
        <dbReference type="ChEBI" id="CHEBI:15378"/>
        <dbReference type="ChEBI" id="CHEBI:30013"/>
        <dbReference type="ChEBI" id="CHEBI:30616"/>
        <dbReference type="ChEBI" id="CHEBI:61977"/>
        <dbReference type="ChEBI" id="CHEBI:456216"/>
        <dbReference type="EC" id="2.7.11.1"/>
    </reaction>
</comment>
<comment type="subcellular location">
    <subcellularLocation>
        <location evidence="1">Cytoplasm</location>
    </subcellularLocation>
    <subcellularLocation>
        <location evidence="1">Cytoplasm</location>
        <location evidence="1">Cytoskeleton</location>
        <location evidence="1">Microtubule organizing center</location>
        <location evidence="1">Centrosome</location>
    </subcellularLocation>
    <subcellularLocation>
        <location evidence="1">Chromosome</location>
        <location evidence="1">Centromere</location>
        <location evidence="1">Kinetochore</location>
    </subcellularLocation>
    <subcellularLocation>
        <location evidence="1">Nucleus speckle</location>
    </subcellularLocation>
    <subcellularLocation>
        <location evidence="2">Cytoplasm</location>
        <location evidence="2">Cytoskeleton</location>
        <location evidence="2">Cilium basal body</location>
    </subcellularLocation>
    <subcellularLocation>
        <location evidence="2">Cytoplasm</location>
        <location evidence="2">Cytoskeleton</location>
        <location evidence="2">Spindle</location>
    </subcellularLocation>
</comment>
<comment type="alternative products">
    <event type="alternative splicing"/>
    <isoform>
        <id>P67962-1</id>
        <id>P70065-1</id>
        <name>CK1A</name>
        <sequence type="displayed"/>
    </isoform>
    <isoform>
        <id>P67962-2</id>
        <id>P70065-2</id>
        <name>CK1A-L</name>
        <sequence type="described" ref="VSP_004747"/>
    </isoform>
    <isoform>
        <id>P67962-3</id>
        <id>P70065-3</id>
        <name>CK1A-LS</name>
        <sequence type="described" ref="VSP_004746"/>
    </isoform>
</comment>
<comment type="PTM">
    <text>Autophosphorylated.</text>
</comment>
<comment type="similarity">
    <text evidence="7">Belongs to the protein kinase superfamily. CK1 Ser/Thr protein kinase family. Casein kinase I subfamily.</text>
</comment>
<proteinExistence type="evidence at transcript level"/>
<evidence type="ECO:0000250" key="1">
    <source>
        <dbReference type="UniProtKB" id="P48729"/>
    </source>
</evidence>
<evidence type="ECO:0000250" key="2">
    <source>
        <dbReference type="UniProtKB" id="Q8BK63"/>
    </source>
</evidence>
<evidence type="ECO:0000255" key="3">
    <source>
        <dbReference type="PROSITE-ProRule" id="PRU00159"/>
    </source>
</evidence>
<evidence type="ECO:0000255" key="4">
    <source>
        <dbReference type="PROSITE-ProRule" id="PRU10027"/>
    </source>
</evidence>
<evidence type="ECO:0000256" key="5">
    <source>
        <dbReference type="SAM" id="MobiDB-lite"/>
    </source>
</evidence>
<evidence type="ECO:0000303" key="6">
    <source>
    </source>
</evidence>
<evidence type="ECO:0000305" key="7"/>
<dbReference type="EC" id="2.7.11.1"/>
<dbReference type="EMBL" id="U80822">
    <property type="protein sequence ID" value="AAB95648.1"/>
    <property type="molecule type" value="mRNA"/>
</dbReference>
<dbReference type="EMBL" id="U80823">
    <property type="protein sequence ID" value="AAB96334.1"/>
    <property type="molecule type" value="mRNA"/>
</dbReference>
<dbReference type="EMBL" id="AF042863">
    <property type="protein sequence ID" value="AAC35749.1"/>
    <property type="molecule type" value="mRNA"/>
</dbReference>
<dbReference type="RefSeq" id="NP_990384.1">
    <property type="nucleotide sequence ID" value="NM_205053.1"/>
</dbReference>
<dbReference type="RefSeq" id="XP_015149158.1">
    <property type="nucleotide sequence ID" value="XM_015293672.1"/>
</dbReference>
<dbReference type="RefSeq" id="XP_015149159.1">
    <molecule id="P67962-1"/>
    <property type="nucleotide sequence ID" value="XM_015293673.4"/>
</dbReference>
<dbReference type="RefSeq" id="XP_015149160.1">
    <molecule id="P67962-2"/>
    <property type="nucleotide sequence ID" value="XM_015293674.4"/>
</dbReference>
<dbReference type="RefSeq" id="XP_046782802.1">
    <molecule id="P67962-1"/>
    <property type="nucleotide sequence ID" value="XM_046926846.1"/>
</dbReference>
<dbReference type="RefSeq" id="XP_046782803.1">
    <molecule id="P67962-2"/>
    <property type="nucleotide sequence ID" value="XM_046926847.1"/>
</dbReference>
<dbReference type="SMR" id="P67962"/>
<dbReference type="FunCoup" id="P67962">
    <property type="interactions" value="1660"/>
</dbReference>
<dbReference type="STRING" id="9031.ENSGALP00000065235"/>
<dbReference type="PaxDb" id="9031-ENSGALP00000002080"/>
<dbReference type="Ensembl" id="ENSGALT00010028715.1">
    <molecule id="P67962-2"/>
    <property type="protein sequence ID" value="ENSGALP00010016517.1"/>
    <property type="gene ID" value="ENSGALG00010011991.1"/>
</dbReference>
<dbReference type="GeneID" id="395924"/>
<dbReference type="KEGG" id="gga:395924"/>
<dbReference type="CTD" id="1452"/>
<dbReference type="VEuPathDB" id="HostDB:geneid_395924"/>
<dbReference type="eggNOG" id="KOG1163">
    <property type="taxonomic scope" value="Eukaryota"/>
</dbReference>
<dbReference type="GeneTree" id="ENSGT00940000153700"/>
<dbReference type="HOGENOM" id="CLU_019279_2_7_1"/>
<dbReference type="InParanoid" id="P67962"/>
<dbReference type="OrthoDB" id="5800476at2759"/>
<dbReference type="PhylomeDB" id="P67962"/>
<dbReference type="BRENDA" id="2.7.11.1">
    <property type="organism ID" value="1306"/>
</dbReference>
<dbReference type="Reactome" id="R-GGA-195253">
    <property type="pathway name" value="Degradation of beta-catenin by the destruction complex"/>
</dbReference>
<dbReference type="Reactome" id="R-GGA-196299">
    <property type="pathway name" value="Beta-catenin phosphorylation cascade"/>
</dbReference>
<dbReference type="Reactome" id="R-GGA-5610785">
    <property type="pathway name" value="GLI3 is processed to GLI3R by the proteasome"/>
</dbReference>
<dbReference type="Reactome" id="R-GGA-5635838">
    <property type="pathway name" value="Activation of SMO"/>
</dbReference>
<dbReference type="PRO" id="PR:P67962"/>
<dbReference type="Proteomes" id="UP000000539">
    <property type="component" value="Chromosome 13"/>
</dbReference>
<dbReference type="Bgee" id="ENSGALG00000001364">
    <property type="expression patterns" value="Expressed in spermatocyte and 12 other cell types or tissues"/>
</dbReference>
<dbReference type="GO" id="GO:0005813">
    <property type="term" value="C:centrosome"/>
    <property type="evidence" value="ECO:0007669"/>
    <property type="project" value="UniProtKB-SubCell"/>
</dbReference>
<dbReference type="GO" id="GO:0036064">
    <property type="term" value="C:ciliary basal body"/>
    <property type="evidence" value="ECO:0000250"/>
    <property type="project" value="UniProtKB"/>
</dbReference>
<dbReference type="GO" id="GO:0005737">
    <property type="term" value="C:cytoplasm"/>
    <property type="evidence" value="ECO:0000318"/>
    <property type="project" value="GO_Central"/>
</dbReference>
<dbReference type="GO" id="GO:0000776">
    <property type="term" value="C:kinetochore"/>
    <property type="evidence" value="ECO:0007669"/>
    <property type="project" value="UniProtKB-KW"/>
</dbReference>
<dbReference type="GO" id="GO:0016607">
    <property type="term" value="C:nuclear speck"/>
    <property type="evidence" value="ECO:0000250"/>
    <property type="project" value="UniProtKB"/>
</dbReference>
<dbReference type="GO" id="GO:0005634">
    <property type="term" value="C:nucleus"/>
    <property type="evidence" value="ECO:0000318"/>
    <property type="project" value="GO_Central"/>
</dbReference>
<dbReference type="GO" id="GO:0005819">
    <property type="term" value="C:spindle"/>
    <property type="evidence" value="ECO:0000250"/>
    <property type="project" value="UniProtKB"/>
</dbReference>
<dbReference type="GO" id="GO:0005524">
    <property type="term" value="F:ATP binding"/>
    <property type="evidence" value="ECO:0007669"/>
    <property type="project" value="UniProtKB-KW"/>
</dbReference>
<dbReference type="GO" id="GO:0106310">
    <property type="term" value="F:protein serine kinase activity"/>
    <property type="evidence" value="ECO:0007669"/>
    <property type="project" value="RHEA"/>
</dbReference>
<dbReference type="GO" id="GO:0004674">
    <property type="term" value="F:protein serine/threonine kinase activity"/>
    <property type="evidence" value="ECO:0000250"/>
    <property type="project" value="UniProtKB"/>
</dbReference>
<dbReference type="GO" id="GO:0051301">
    <property type="term" value="P:cell division"/>
    <property type="evidence" value="ECO:0007669"/>
    <property type="project" value="UniProtKB-KW"/>
</dbReference>
<dbReference type="GO" id="GO:0045104">
    <property type="term" value="P:intermediate filament cytoskeleton organization"/>
    <property type="evidence" value="ECO:0000250"/>
    <property type="project" value="UniProtKB"/>
</dbReference>
<dbReference type="GO" id="GO:0090090">
    <property type="term" value="P:negative regulation of canonical Wnt signaling pathway"/>
    <property type="evidence" value="ECO:0000318"/>
    <property type="project" value="GO_Central"/>
</dbReference>
<dbReference type="GO" id="GO:1900226">
    <property type="term" value="P:negative regulation of NLRP3 inflammasome complex assembly"/>
    <property type="evidence" value="ECO:0000250"/>
    <property type="project" value="UniProtKB"/>
</dbReference>
<dbReference type="GO" id="GO:0006468">
    <property type="term" value="P:protein phosphorylation"/>
    <property type="evidence" value="ECO:0000250"/>
    <property type="project" value="UniProtKB"/>
</dbReference>
<dbReference type="GO" id="GO:0007165">
    <property type="term" value="P:signal transduction"/>
    <property type="evidence" value="ECO:0000318"/>
    <property type="project" value="GO_Central"/>
</dbReference>
<dbReference type="GO" id="GO:0016055">
    <property type="term" value="P:Wnt signaling pathway"/>
    <property type="evidence" value="ECO:0007669"/>
    <property type="project" value="UniProtKB-KW"/>
</dbReference>
<dbReference type="CDD" id="cd14128">
    <property type="entry name" value="STKc_CK1_alpha"/>
    <property type="match status" value="1"/>
</dbReference>
<dbReference type="FunFam" id="1.10.510.10:FF:000120">
    <property type="entry name" value="Casein kinase I isoform alpha"/>
    <property type="match status" value="1"/>
</dbReference>
<dbReference type="FunFam" id="3.30.200.20:FF:000538">
    <property type="entry name" value="Putative Casein kinase I"/>
    <property type="match status" value="1"/>
</dbReference>
<dbReference type="Gene3D" id="1.10.510.10">
    <property type="entry name" value="Transferase(Phosphotransferase) domain 1"/>
    <property type="match status" value="1"/>
</dbReference>
<dbReference type="InterPro" id="IPR050235">
    <property type="entry name" value="CK1_Ser-Thr_kinase"/>
</dbReference>
<dbReference type="InterPro" id="IPR011009">
    <property type="entry name" value="Kinase-like_dom_sf"/>
</dbReference>
<dbReference type="InterPro" id="IPR000719">
    <property type="entry name" value="Prot_kinase_dom"/>
</dbReference>
<dbReference type="InterPro" id="IPR017441">
    <property type="entry name" value="Protein_kinase_ATP_BS"/>
</dbReference>
<dbReference type="InterPro" id="IPR008271">
    <property type="entry name" value="Ser/Thr_kinase_AS"/>
</dbReference>
<dbReference type="PANTHER" id="PTHR11909">
    <property type="entry name" value="CASEIN KINASE-RELATED"/>
    <property type="match status" value="1"/>
</dbReference>
<dbReference type="Pfam" id="PF00069">
    <property type="entry name" value="Pkinase"/>
    <property type="match status" value="1"/>
</dbReference>
<dbReference type="SMART" id="SM00220">
    <property type="entry name" value="S_TKc"/>
    <property type="match status" value="1"/>
</dbReference>
<dbReference type="SUPFAM" id="SSF56112">
    <property type="entry name" value="Protein kinase-like (PK-like)"/>
    <property type="match status" value="1"/>
</dbReference>
<dbReference type="PROSITE" id="PS00107">
    <property type="entry name" value="PROTEIN_KINASE_ATP"/>
    <property type="match status" value="1"/>
</dbReference>
<dbReference type="PROSITE" id="PS50011">
    <property type="entry name" value="PROTEIN_KINASE_DOM"/>
    <property type="match status" value="1"/>
</dbReference>
<dbReference type="PROSITE" id="PS00108">
    <property type="entry name" value="PROTEIN_KINASE_ST"/>
    <property type="match status" value="1"/>
</dbReference>
<reference key="1">
    <citation type="journal article" date="1998" name="Gene">
        <title>Identification of four alternatively spliced isoforms of chicken casein kinase I alpha that are all expressed in diverse cell types.</title>
        <authorList>
            <person name="Green C.L."/>
            <person name="Bennett G.S."/>
        </authorList>
    </citation>
    <scope>NUCLEOTIDE SEQUENCE [MRNA] (ISOFORMS CK1A; CK1A-L AND CK1A-LS)</scope>
    <source>
        <tissue>Brain</tissue>
    </source>
</reference>